<protein>
    <recommendedName>
        <fullName evidence="1">7-cyano-7-deazaguanine synthase</fullName>
        <ecNumber evidence="1">6.3.4.20</ecNumber>
    </recommendedName>
    <alternativeName>
        <fullName evidence="1">7-cyano-7-carbaguanine synthase</fullName>
    </alternativeName>
    <alternativeName>
        <fullName evidence="1">PreQ(0) synthase</fullName>
    </alternativeName>
    <alternativeName>
        <fullName evidence="1">Queuosine biosynthesis protein QueC</fullName>
    </alternativeName>
</protein>
<sequence length="233" mass="24919">MAKRPTKRAVVLLSGGLDSTTCLAVARRDGFEAHCLSVDYGQRHKGELARARRLSRALGAADHRVVKVDLSAFGGSALTDRAIAVPKGRSGRRRAAEIPVTYVPARNTVLLALALAHAETLGAEDVYVGVNAIDYSGYPDCRPAFLRAFERLATVATKAGVEGRPLRIHAPLLRLTKAGIVRLGTSLGVPYRVTLSCYDPVRGRACGACDACVLRRKGFAEAGIPDPTLYVQK</sequence>
<organism>
    <name type="scientific">Anaeromyxobacter sp. (strain Fw109-5)</name>
    <dbReference type="NCBI Taxonomy" id="404589"/>
    <lineage>
        <taxon>Bacteria</taxon>
        <taxon>Pseudomonadati</taxon>
        <taxon>Myxococcota</taxon>
        <taxon>Myxococcia</taxon>
        <taxon>Myxococcales</taxon>
        <taxon>Cystobacterineae</taxon>
        <taxon>Anaeromyxobacteraceae</taxon>
        <taxon>Anaeromyxobacter</taxon>
    </lineage>
</organism>
<keyword id="KW-0067">ATP-binding</keyword>
<keyword id="KW-0436">Ligase</keyword>
<keyword id="KW-0479">Metal-binding</keyword>
<keyword id="KW-0547">Nucleotide-binding</keyword>
<keyword id="KW-0671">Queuosine biosynthesis</keyword>
<keyword id="KW-1185">Reference proteome</keyword>
<keyword id="KW-0862">Zinc</keyword>
<accession>A7HHA2</accession>
<comment type="function">
    <text evidence="1">Catalyzes the ATP-dependent conversion of 7-carboxy-7-deazaguanine (CDG) to 7-cyano-7-deazaguanine (preQ(0)).</text>
</comment>
<comment type="catalytic activity">
    <reaction evidence="1">
        <text>7-carboxy-7-deazaguanine + NH4(+) + ATP = 7-cyano-7-deazaguanine + ADP + phosphate + H2O + H(+)</text>
        <dbReference type="Rhea" id="RHEA:27982"/>
        <dbReference type="ChEBI" id="CHEBI:15377"/>
        <dbReference type="ChEBI" id="CHEBI:15378"/>
        <dbReference type="ChEBI" id="CHEBI:28938"/>
        <dbReference type="ChEBI" id="CHEBI:30616"/>
        <dbReference type="ChEBI" id="CHEBI:43474"/>
        <dbReference type="ChEBI" id="CHEBI:45075"/>
        <dbReference type="ChEBI" id="CHEBI:61036"/>
        <dbReference type="ChEBI" id="CHEBI:456216"/>
        <dbReference type="EC" id="6.3.4.20"/>
    </reaction>
</comment>
<comment type="cofactor">
    <cofactor evidence="1">
        <name>Zn(2+)</name>
        <dbReference type="ChEBI" id="CHEBI:29105"/>
    </cofactor>
    <text evidence="1">Binds 1 zinc ion per subunit.</text>
</comment>
<comment type="pathway">
    <text evidence="1">Purine metabolism; 7-cyano-7-deazaguanine biosynthesis.</text>
</comment>
<comment type="similarity">
    <text evidence="1">Belongs to the QueC family.</text>
</comment>
<name>QUEC_ANADF</name>
<gene>
    <name evidence="1" type="primary">queC</name>
    <name type="ordered locus">Anae109_3919</name>
</gene>
<proteinExistence type="inferred from homology"/>
<feature type="chain" id="PRO_0000336888" description="7-cyano-7-deazaguanine synthase">
    <location>
        <begin position="1"/>
        <end position="233"/>
    </location>
</feature>
<feature type="binding site" evidence="1">
    <location>
        <begin position="13"/>
        <end position="23"/>
    </location>
    <ligand>
        <name>ATP</name>
        <dbReference type="ChEBI" id="CHEBI:30616"/>
    </ligand>
</feature>
<feature type="binding site" evidence="1">
    <location>
        <position position="197"/>
    </location>
    <ligand>
        <name>Zn(2+)</name>
        <dbReference type="ChEBI" id="CHEBI:29105"/>
    </ligand>
</feature>
<feature type="binding site" evidence="1">
    <location>
        <position position="206"/>
    </location>
    <ligand>
        <name>Zn(2+)</name>
        <dbReference type="ChEBI" id="CHEBI:29105"/>
    </ligand>
</feature>
<feature type="binding site" evidence="1">
    <location>
        <position position="209"/>
    </location>
    <ligand>
        <name>Zn(2+)</name>
        <dbReference type="ChEBI" id="CHEBI:29105"/>
    </ligand>
</feature>
<feature type="binding site" evidence="1">
    <location>
        <position position="212"/>
    </location>
    <ligand>
        <name>Zn(2+)</name>
        <dbReference type="ChEBI" id="CHEBI:29105"/>
    </ligand>
</feature>
<evidence type="ECO:0000255" key="1">
    <source>
        <dbReference type="HAMAP-Rule" id="MF_01633"/>
    </source>
</evidence>
<dbReference type="EC" id="6.3.4.20" evidence="1"/>
<dbReference type="EMBL" id="CP000769">
    <property type="protein sequence ID" value="ABS28098.1"/>
    <property type="molecule type" value="Genomic_DNA"/>
</dbReference>
<dbReference type="RefSeq" id="WP_012098733.1">
    <property type="nucleotide sequence ID" value="NC_009675.1"/>
</dbReference>
<dbReference type="SMR" id="A7HHA2"/>
<dbReference type="STRING" id="404589.Anae109_3919"/>
<dbReference type="KEGG" id="afw:Anae109_3919"/>
<dbReference type="eggNOG" id="COG0603">
    <property type="taxonomic scope" value="Bacteria"/>
</dbReference>
<dbReference type="HOGENOM" id="CLU_081854_1_1_7"/>
<dbReference type="OrthoDB" id="9789567at2"/>
<dbReference type="UniPathway" id="UPA00391"/>
<dbReference type="Proteomes" id="UP000006382">
    <property type="component" value="Chromosome"/>
</dbReference>
<dbReference type="GO" id="GO:0005524">
    <property type="term" value="F:ATP binding"/>
    <property type="evidence" value="ECO:0007669"/>
    <property type="project" value="UniProtKB-UniRule"/>
</dbReference>
<dbReference type="GO" id="GO:0016879">
    <property type="term" value="F:ligase activity, forming carbon-nitrogen bonds"/>
    <property type="evidence" value="ECO:0007669"/>
    <property type="project" value="UniProtKB-UniRule"/>
</dbReference>
<dbReference type="GO" id="GO:0008270">
    <property type="term" value="F:zinc ion binding"/>
    <property type="evidence" value="ECO:0007669"/>
    <property type="project" value="UniProtKB-UniRule"/>
</dbReference>
<dbReference type="GO" id="GO:0008616">
    <property type="term" value="P:queuosine biosynthetic process"/>
    <property type="evidence" value="ECO:0007669"/>
    <property type="project" value="UniProtKB-UniRule"/>
</dbReference>
<dbReference type="CDD" id="cd01995">
    <property type="entry name" value="QueC-like"/>
    <property type="match status" value="1"/>
</dbReference>
<dbReference type="Gene3D" id="3.40.50.620">
    <property type="entry name" value="HUPs"/>
    <property type="match status" value="1"/>
</dbReference>
<dbReference type="HAMAP" id="MF_01633">
    <property type="entry name" value="QueC"/>
    <property type="match status" value="1"/>
</dbReference>
<dbReference type="InterPro" id="IPR018317">
    <property type="entry name" value="QueC"/>
</dbReference>
<dbReference type="InterPro" id="IPR014729">
    <property type="entry name" value="Rossmann-like_a/b/a_fold"/>
</dbReference>
<dbReference type="NCBIfam" id="TIGR00364">
    <property type="entry name" value="7-cyano-7-deazaguanine synthase QueC"/>
    <property type="match status" value="1"/>
</dbReference>
<dbReference type="PANTHER" id="PTHR42914">
    <property type="entry name" value="7-CYANO-7-DEAZAGUANINE SYNTHASE"/>
    <property type="match status" value="1"/>
</dbReference>
<dbReference type="PANTHER" id="PTHR42914:SF1">
    <property type="entry name" value="7-CYANO-7-DEAZAGUANINE SYNTHASE"/>
    <property type="match status" value="1"/>
</dbReference>
<dbReference type="Pfam" id="PF06508">
    <property type="entry name" value="QueC"/>
    <property type="match status" value="1"/>
</dbReference>
<dbReference type="PIRSF" id="PIRSF006293">
    <property type="entry name" value="ExsB"/>
    <property type="match status" value="1"/>
</dbReference>
<dbReference type="SUPFAM" id="SSF52402">
    <property type="entry name" value="Adenine nucleotide alpha hydrolases-like"/>
    <property type="match status" value="1"/>
</dbReference>
<reference key="1">
    <citation type="journal article" date="2015" name="Genome Announc.">
        <title>Complete genome sequence of Anaeromyxobacter sp. Fw109-5, an anaerobic, metal-reducing bacterium isolated from a contaminated subsurface environment.</title>
        <authorList>
            <person name="Hwang C."/>
            <person name="Copeland A."/>
            <person name="Lucas S."/>
            <person name="Lapidus A."/>
            <person name="Barry K."/>
            <person name="Glavina Del Rio T."/>
            <person name="Dalin E."/>
            <person name="Tice H."/>
            <person name="Pitluck S."/>
            <person name="Sims D."/>
            <person name="Brettin T."/>
            <person name="Bruce D.C."/>
            <person name="Detter J.C."/>
            <person name="Han C.S."/>
            <person name="Schmutz J."/>
            <person name="Larimer F.W."/>
            <person name="Land M.L."/>
            <person name="Hauser L.J."/>
            <person name="Kyrpides N."/>
            <person name="Lykidis A."/>
            <person name="Richardson P."/>
            <person name="Belieav A."/>
            <person name="Sanford R.A."/>
            <person name="Loeffler F.E."/>
            <person name="Fields M.W."/>
        </authorList>
    </citation>
    <scope>NUCLEOTIDE SEQUENCE [LARGE SCALE GENOMIC DNA]</scope>
    <source>
        <strain>Fw109-5</strain>
    </source>
</reference>